<dbReference type="EMBL" id="CP000720">
    <property type="protein sequence ID" value="ABS48950.1"/>
    <property type="molecule type" value="Genomic_DNA"/>
</dbReference>
<dbReference type="RefSeq" id="WP_002208551.1">
    <property type="nucleotide sequence ID" value="NC_009708.1"/>
</dbReference>
<dbReference type="SMR" id="A7FG55"/>
<dbReference type="KEGG" id="ypi:YpsIP31758_1253"/>
<dbReference type="HOGENOM" id="CLU_198936_0_0_6"/>
<dbReference type="Proteomes" id="UP000002412">
    <property type="component" value="Chromosome"/>
</dbReference>
<dbReference type="GO" id="GO:0005886">
    <property type="term" value="C:plasma membrane"/>
    <property type="evidence" value="ECO:0007669"/>
    <property type="project" value="UniProtKB-SubCell"/>
</dbReference>
<dbReference type="HAMAP" id="MF_01566">
    <property type="entry name" value="UPF0370"/>
    <property type="match status" value="1"/>
</dbReference>
<dbReference type="InterPro" id="IPR020910">
    <property type="entry name" value="UPF0370"/>
</dbReference>
<dbReference type="NCBIfam" id="NF010185">
    <property type="entry name" value="PRK13664.1"/>
    <property type="match status" value="1"/>
</dbReference>
<dbReference type="Pfam" id="PF13980">
    <property type="entry name" value="UPF0370"/>
    <property type="match status" value="1"/>
</dbReference>
<name>Y1253_YERP3</name>
<reference key="1">
    <citation type="journal article" date="2007" name="PLoS Genet.">
        <title>The complete genome sequence of Yersinia pseudotuberculosis IP31758, the causative agent of Far East scarlet-like fever.</title>
        <authorList>
            <person name="Eppinger M."/>
            <person name="Rosovitz M.J."/>
            <person name="Fricke W.F."/>
            <person name="Rasko D.A."/>
            <person name="Kokorina G."/>
            <person name="Fayolle C."/>
            <person name="Lindler L.E."/>
            <person name="Carniel E."/>
            <person name="Ravel J."/>
        </authorList>
    </citation>
    <scope>NUCLEOTIDE SEQUENCE [LARGE SCALE GENOMIC DNA]</scope>
    <source>
        <strain>IP 31758</strain>
    </source>
</reference>
<accession>A7FG55</accession>
<proteinExistence type="inferred from homology"/>
<evidence type="ECO:0000255" key="1">
    <source>
        <dbReference type="HAMAP-Rule" id="MF_01566"/>
    </source>
</evidence>
<evidence type="ECO:0000256" key="2">
    <source>
        <dbReference type="SAM" id="MobiDB-lite"/>
    </source>
</evidence>
<comment type="subcellular location">
    <subcellularLocation>
        <location evidence="1">Cell membrane</location>
        <topology evidence="1">Single-pass membrane protein</topology>
    </subcellularLocation>
</comment>
<comment type="similarity">
    <text evidence="1">Belongs to the UPF0370 family.</text>
</comment>
<sequence length="64" mass="7896">MQWLADYWWIILILLVGMILNGIKELRRLDHKRFLDNKPELPPHRDNNAQWDDEDDWPDQNKKK</sequence>
<feature type="chain" id="PRO_1000069088" description="UPF0370 protein YpsIP31758_1253">
    <location>
        <begin position="1"/>
        <end position="64"/>
    </location>
</feature>
<feature type="transmembrane region" description="Helical" evidence="1">
    <location>
        <begin position="3"/>
        <end position="23"/>
    </location>
</feature>
<feature type="region of interest" description="Disordered" evidence="2">
    <location>
        <begin position="36"/>
        <end position="64"/>
    </location>
</feature>
<feature type="compositionally biased region" description="Basic and acidic residues" evidence="2">
    <location>
        <begin position="36"/>
        <end position="47"/>
    </location>
</feature>
<protein>
    <recommendedName>
        <fullName evidence="1">UPF0370 protein YpsIP31758_1253</fullName>
    </recommendedName>
</protein>
<organism>
    <name type="scientific">Yersinia pseudotuberculosis serotype O:1b (strain IP 31758)</name>
    <dbReference type="NCBI Taxonomy" id="349747"/>
    <lineage>
        <taxon>Bacteria</taxon>
        <taxon>Pseudomonadati</taxon>
        <taxon>Pseudomonadota</taxon>
        <taxon>Gammaproteobacteria</taxon>
        <taxon>Enterobacterales</taxon>
        <taxon>Yersiniaceae</taxon>
        <taxon>Yersinia</taxon>
    </lineage>
</organism>
<keyword id="KW-1003">Cell membrane</keyword>
<keyword id="KW-0472">Membrane</keyword>
<keyword id="KW-0812">Transmembrane</keyword>
<keyword id="KW-1133">Transmembrane helix</keyword>
<gene>
    <name type="ordered locus">YpsIP31758_1253</name>
</gene>